<gene>
    <name evidence="1" type="primary">lipB</name>
    <name type="ordered locus">CKO_02528</name>
</gene>
<comment type="function">
    <text evidence="1">Catalyzes the transfer of endogenously produced octanoic acid from octanoyl-acyl-carrier-protein onto the lipoyl domains of lipoate-dependent enzymes. Lipoyl-ACP can also act as a substrate although octanoyl-ACP is likely to be the physiological substrate.</text>
</comment>
<comment type="catalytic activity">
    <reaction evidence="1">
        <text>octanoyl-[ACP] + L-lysyl-[protein] = N(6)-octanoyl-L-lysyl-[protein] + holo-[ACP] + H(+)</text>
        <dbReference type="Rhea" id="RHEA:17665"/>
        <dbReference type="Rhea" id="RHEA-COMP:9636"/>
        <dbReference type="Rhea" id="RHEA-COMP:9685"/>
        <dbReference type="Rhea" id="RHEA-COMP:9752"/>
        <dbReference type="Rhea" id="RHEA-COMP:9928"/>
        <dbReference type="ChEBI" id="CHEBI:15378"/>
        <dbReference type="ChEBI" id="CHEBI:29969"/>
        <dbReference type="ChEBI" id="CHEBI:64479"/>
        <dbReference type="ChEBI" id="CHEBI:78463"/>
        <dbReference type="ChEBI" id="CHEBI:78809"/>
        <dbReference type="EC" id="2.3.1.181"/>
    </reaction>
</comment>
<comment type="pathway">
    <text evidence="1">Protein modification; protein lipoylation via endogenous pathway; protein N(6)-(lipoyl)lysine from octanoyl-[acyl-carrier-protein]: step 1/2.</text>
</comment>
<comment type="subcellular location">
    <subcellularLocation>
        <location evidence="1">Cytoplasm</location>
    </subcellularLocation>
</comment>
<comment type="miscellaneous">
    <text evidence="1">In the reaction, the free carboxyl group of octanoic acid is attached via an amide linkage to the epsilon-amino group of a specific lysine residue of lipoyl domains of lipoate-dependent enzymes.</text>
</comment>
<comment type="similarity">
    <text evidence="1">Belongs to the LipB family.</text>
</comment>
<comment type="sequence caution" evidence="3">
    <conflict type="erroneous initiation">
        <sequence resource="EMBL-CDS" id="ABV13637"/>
    </conflict>
    <text>Extended N-terminus.</text>
</comment>
<evidence type="ECO:0000255" key="1">
    <source>
        <dbReference type="HAMAP-Rule" id="MF_00013"/>
    </source>
</evidence>
<evidence type="ECO:0000255" key="2">
    <source>
        <dbReference type="PROSITE-ProRule" id="PRU01067"/>
    </source>
</evidence>
<evidence type="ECO:0000305" key="3"/>
<protein>
    <recommendedName>
        <fullName evidence="1">Octanoyltransferase</fullName>
        <ecNumber evidence="1">2.3.1.181</ecNumber>
    </recommendedName>
    <alternativeName>
        <fullName evidence="1">Lipoate-protein ligase B</fullName>
    </alternativeName>
    <alternativeName>
        <fullName evidence="1">Lipoyl/octanoyl transferase</fullName>
    </alternativeName>
    <alternativeName>
        <fullName evidence="1">Octanoyl-[acyl-carrier-protein]-protein N-octanoyltransferase</fullName>
    </alternativeName>
</protein>
<keyword id="KW-0012">Acyltransferase</keyword>
<keyword id="KW-0963">Cytoplasm</keyword>
<keyword id="KW-1185">Reference proteome</keyword>
<keyword id="KW-0808">Transferase</keyword>
<reference key="1">
    <citation type="submission" date="2007-08" db="EMBL/GenBank/DDBJ databases">
        <authorList>
            <consortium name="The Citrobacter koseri Genome Sequencing Project"/>
            <person name="McClelland M."/>
            <person name="Sanderson E.K."/>
            <person name="Porwollik S."/>
            <person name="Spieth J."/>
            <person name="Clifton W.S."/>
            <person name="Latreille P."/>
            <person name="Courtney L."/>
            <person name="Wang C."/>
            <person name="Pepin K."/>
            <person name="Bhonagiri V."/>
            <person name="Nash W."/>
            <person name="Johnson M."/>
            <person name="Thiruvilangam P."/>
            <person name="Wilson R."/>
        </authorList>
    </citation>
    <scope>NUCLEOTIDE SEQUENCE [LARGE SCALE GENOMIC DNA]</scope>
    <source>
        <strain>ATCC BAA-895 / CDC 4225-83 / SGSC4696</strain>
    </source>
</reference>
<dbReference type="EC" id="2.3.1.181" evidence="1"/>
<dbReference type="EMBL" id="CP000822">
    <property type="protein sequence ID" value="ABV13637.1"/>
    <property type="status" value="ALT_INIT"/>
    <property type="molecule type" value="Genomic_DNA"/>
</dbReference>
<dbReference type="RefSeq" id="WP_024130548.1">
    <property type="nucleotide sequence ID" value="NC_009792.1"/>
</dbReference>
<dbReference type="SMR" id="A8AJH4"/>
<dbReference type="STRING" id="290338.CKO_02528"/>
<dbReference type="GeneID" id="45136404"/>
<dbReference type="KEGG" id="cko:CKO_02528"/>
<dbReference type="HOGENOM" id="CLU_035168_3_1_6"/>
<dbReference type="OrthoDB" id="9787061at2"/>
<dbReference type="UniPathway" id="UPA00538">
    <property type="reaction ID" value="UER00592"/>
</dbReference>
<dbReference type="Proteomes" id="UP000008148">
    <property type="component" value="Chromosome"/>
</dbReference>
<dbReference type="GO" id="GO:0005737">
    <property type="term" value="C:cytoplasm"/>
    <property type="evidence" value="ECO:0007669"/>
    <property type="project" value="UniProtKB-SubCell"/>
</dbReference>
<dbReference type="GO" id="GO:0033819">
    <property type="term" value="F:lipoyl(octanoyl) transferase activity"/>
    <property type="evidence" value="ECO:0007669"/>
    <property type="project" value="UniProtKB-EC"/>
</dbReference>
<dbReference type="GO" id="GO:0036211">
    <property type="term" value="P:protein modification process"/>
    <property type="evidence" value="ECO:0007669"/>
    <property type="project" value="InterPro"/>
</dbReference>
<dbReference type="CDD" id="cd16444">
    <property type="entry name" value="LipB"/>
    <property type="match status" value="1"/>
</dbReference>
<dbReference type="FunFam" id="3.30.930.10:FF:000020">
    <property type="entry name" value="Octanoyltransferase"/>
    <property type="match status" value="1"/>
</dbReference>
<dbReference type="Gene3D" id="3.30.930.10">
    <property type="entry name" value="Bira Bifunctional Protein, Domain 2"/>
    <property type="match status" value="1"/>
</dbReference>
<dbReference type="HAMAP" id="MF_00013">
    <property type="entry name" value="LipB"/>
    <property type="match status" value="1"/>
</dbReference>
<dbReference type="InterPro" id="IPR045864">
    <property type="entry name" value="aa-tRNA-synth_II/BPL/LPL"/>
</dbReference>
<dbReference type="InterPro" id="IPR004143">
    <property type="entry name" value="BPL_LPL_catalytic"/>
</dbReference>
<dbReference type="InterPro" id="IPR000544">
    <property type="entry name" value="Octanoyltransferase"/>
</dbReference>
<dbReference type="InterPro" id="IPR020605">
    <property type="entry name" value="Octanoyltransferase_CS"/>
</dbReference>
<dbReference type="NCBIfam" id="TIGR00214">
    <property type="entry name" value="lipB"/>
    <property type="match status" value="1"/>
</dbReference>
<dbReference type="NCBIfam" id="NF010922">
    <property type="entry name" value="PRK14342.1"/>
    <property type="match status" value="1"/>
</dbReference>
<dbReference type="PANTHER" id="PTHR10993:SF7">
    <property type="entry name" value="LIPOYLTRANSFERASE 2, MITOCHONDRIAL-RELATED"/>
    <property type="match status" value="1"/>
</dbReference>
<dbReference type="PANTHER" id="PTHR10993">
    <property type="entry name" value="OCTANOYLTRANSFERASE"/>
    <property type="match status" value="1"/>
</dbReference>
<dbReference type="Pfam" id="PF21948">
    <property type="entry name" value="LplA-B_cat"/>
    <property type="match status" value="1"/>
</dbReference>
<dbReference type="PIRSF" id="PIRSF016262">
    <property type="entry name" value="LPLase"/>
    <property type="match status" value="1"/>
</dbReference>
<dbReference type="SUPFAM" id="SSF55681">
    <property type="entry name" value="Class II aaRS and biotin synthetases"/>
    <property type="match status" value="1"/>
</dbReference>
<dbReference type="PROSITE" id="PS51733">
    <property type="entry name" value="BPL_LPL_CATALYTIC"/>
    <property type="match status" value="1"/>
</dbReference>
<dbReference type="PROSITE" id="PS01313">
    <property type="entry name" value="LIPB"/>
    <property type="match status" value="1"/>
</dbReference>
<proteinExistence type="inferred from homology"/>
<name>LIPB_CITK8</name>
<accession>A8AJH4</accession>
<sequence length="213" mass="23792">MYQDKILVRQLGLQPYEPVSQAMHEFTDTRDENTPDEIWLVEHFPVFTQGQAGKAEHVLMPGDIPVIQSDRGGQVTYHGPGQQVMYVLLNLKRRKLGVRELVTLLEQTVVNTLAERGIDAHPRADAPGVYVGEKKICSLGLRIRRGCSFHGLALNVNMDLSPFLRINPCGYAGMEMAKISQWDNNATTDNIAPRLLANILALLNNPPHEYIPA</sequence>
<feature type="chain" id="PRO_0000321630" description="Octanoyltransferase">
    <location>
        <begin position="1"/>
        <end position="213"/>
    </location>
</feature>
<feature type="domain" description="BPL/LPL catalytic" evidence="2">
    <location>
        <begin position="32"/>
        <end position="207"/>
    </location>
</feature>
<feature type="active site" description="Acyl-thioester intermediate" evidence="1">
    <location>
        <position position="169"/>
    </location>
</feature>
<feature type="binding site" evidence="1">
    <location>
        <begin position="71"/>
        <end position="78"/>
    </location>
    <ligand>
        <name>substrate</name>
    </ligand>
</feature>
<feature type="binding site" evidence="1">
    <location>
        <begin position="138"/>
        <end position="140"/>
    </location>
    <ligand>
        <name>substrate</name>
    </ligand>
</feature>
<feature type="binding site" evidence="1">
    <location>
        <begin position="151"/>
        <end position="153"/>
    </location>
    <ligand>
        <name>substrate</name>
    </ligand>
</feature>
<feature type="site" description="Lowers pKa of active site Cys" evidence="1">
    <location>
        <position position="135"/>
    </location>
</feature>
<organism>
    <name type="scientific">Citrobacter koseri (strain ATCC BAA-895 / CDC 4225-83 / SGSC4696)</name>
    <dbReference type="NCBI Taxonomy" id="290338"/>
    <lineage>
        <taxon>Bacteria</taxon>
        <taxon>Pseudomonadati</taxon>
        <taxon>Pseudomonadota</taxon>
        <taxon>Gammaproteobacteria</taxon>
        <taxon>Enterobacterales</taxon>
        <taxon>Enterobacteriaceae</taxon>
        <taxon>Citrobacter</taxon>
    </lineage>
</organism>